<feature type="chain" id="PRO_1000126729" description="Large ribosomal subunit protein bL31">
    <location>
        <begin position="1"/>
        <end position="70"/>
    </location>
</feature>
<feature type="binding site" evidence="1">
    <location>
        <position position="16"/>
    </location>
    <ligand>
        <name>Zn(2+)</name>
        <dbReference type="ChEBI" id="CHEBI:29105"/>
    </ligand>
</feature>
<feature type="binding site" evidence="1">
    <location>
        <position position="18"/>
    </location>
    <ligand>
        <name>Zn(2+)</name>
        <dbReference type="ChEBI" id="CHEBI:29105"/>
    </ligand>
</feature>
<feature type="binding site" evidence="1">
    <location>
        <position position="37"/>
    </location>
    <ligand>
        <name>Zn(2+)</name>
        <dbReference type="ChEBI" id="CHEBI:29105"/>
    </ligand>
</feature>
<feature type="binding site" evidence="1">
    <location>
        <position position="40"/>
    </location>
    <ligand>
        <name>Zn(2+)</name>
        <dbReference type="ChEBI" id="CHEBI:29105"/>
    </ligand>
</feature>
<sequence>MKPGIHPKYAIITANCTCGNVIKVNSTAGKDLHLDVCGACHPFYTGTQKVVDTGGRIDKFNKRFAVLAKK</sequence>
<gene>
    <name evidence="1" type="primary">rpmE</name>
    <name type="ordered locus">Sbal195_0498</name>
</gene>
<accession>A9KYT2</accession>
<name>RL31_SHEB9</name>
<proteinExistence type="inferred from homology"/>
<keyword id="KW-0479">Metal-binding</keyword>
<keyword id="KW-0687">Ribonucleoprotein</keyword>
<keyword id="KW-0689">Ribosomal protein</keyword>
<keyword id="KW-0694">RNA-binding</keyword>
<keyword id="KW-0699">rRNA-binding</keyword>
<keyword id="KW-0862">Zinc</keyword>
<reference key="1">
    <citation type="submission" date="2007-11" db="EMBL/GenBank/DDBJ databases">
        <title>Complete sequence of chromosome of Shewanella baltica OS195.</title>
        <authorList>
            <consortium name="US DOE Joint Genome Institute"/>
            <person name="Copeland A."/>
            <person name="Lucas S."/>
            <person name="Lapidus A."/>
            <person name="Barry K."/>
            <person name="Glavina del Rio T."/>
            <person name="Dalin E."/>
            <person name="Tice H."/>
            <person name="Pitluck S."/>
            <person name="Chain P."/>
            <person name="Malfatti S."/>
            <person name="Shin M."/>
            <person name="Vergez L."/>
            <person name="Schmutz J."/>
            <person name="Larimer F."/>
            <person name="Land M."/>
            <person name="Hauser L."/>
            <person name="Kyrpides N."/>
            <person name="Kim E."/>
            <person name="Brettar I."/>
            <person name="Rodrigues J."/>
            <person name="Konstantinidis K."/>
            <person name="Klappenbach J."/>
            <person name="Hofle M."/>
            <person name="Tiedje J."/>
            <person name="Richardson P."/>
        </authorList>
    </citation>
    <scope>NUCLEOTIDE SEQUENCE [LARGE SCALE GENOMIC DNA]</scope>
    <source>
        <strain>OS195</strain>
    </source>
</reference>
<organism>
    <name type="scientific">Shewanella baltica (strain OS195)</name>
    <dbReference type="NCBI Taxonomy" id="399599"/>
    <lineage>
        <taxon>Bacteria</taxon>
        <taxon>Pseudomonadati</taxon>
        <taxon>Pseudomonadota</taxon>
        <taxon>Gammaproteobacteria</taxon>
        <taxon>Alteromonadales</taxon>
        <taxon>Shewanellaceae</taxon>
        <taxon>Shewanella</taxon>
    </lineage>
</organism>
<comment type="function">
    <text evidence="1">Binds the 23S rRNA.</text>
</comment>
<comment type="cofactor">
    <cofactor evidence="1">
        <name>Zn(2+)</name>
        <dbReference type="ChEBI" id="CHEBI:29105"/>
    </cofactor>
    <text evidence="1">Binds 1 zinc ion per subunit.</text>
</comment>
<comment type="subunit">
    <text evidence="1">Part of the 50S ribosomal subunit.</text>
</comment>
<comment type="similarity">
    <text evidence="1">Belongs to the bacterial ribosomal protein bL31 family. Type A subfamily.</text>
</comment>
<protein>
    <recommendedName>
        <fullName evidence="1">Large ribosomal subunit protein bL31</fullName>
    </recommendedName>
    <alternativeName>
        <fullName evidence="2">50S ribosomal protein L31</fullName>
    </alternativeName>
</protein>
<dbReference type="EMBL" id="CP000891">
    <property type="protein sequence ID" value="ABX47676.1"/>
    <property type="molecule type" value="Genomic_DNA"/>
</dbReference>
<dbReference type="RefSeq" id="WP_006083277.1">
    <property type="nucleotide sequence ID" value="NC_009997.1"/>
</dbReference>
<dbReference type="SMR" id="A9KYT2"/>
<dbReference type="GeneID" id="11770827"/>
<dbReference type="KEGG" id="sbn:Sbal195_0498"/>
<dbReference type="HOGENOM" id="CLU_114306_4_3_6"/>
<dbReference type="Proteomes" id="UP000000770">
    <property type="component" value="Chromosome"/>
</dbReference>
<dbReference type="GO" id="GO:1990904">
    <property type="term" value="C:ribonucleoprotein complex"/>
    <property type="evidence" value="ECO:0007669"/>
    <property type="project" value="UniProtKB-KW"/>
</dbReference>
<dbReference type="GO" id="GO:0005840">
    <property type="term" value="C:ribosome"/>
    <property type="evidence" value="ECO:0007669"/>
    <property type="project" value="UniProtKB-KW"/>
</dbReference>
<dbReference type="GO" id="GO:0046872">
    <property type="term" value="F:metal ion binding"/>
    <property type="evidence" value="ECO:0007669"/>
    <property type="project" value="UniProtKB-KW"/>
</dbReference>
<dbReference type="GO" id="GO:0019843">
    <property type="term" value="F:rRNA binding"/>
    <property type="evidence" value="ECO:0007669"/>
    <property type="project" value="UniProtKB-KW"/>
</dbReference>
<dbReference type="GO" id="GO:0003735">
    <property type="term" value="F:structural constituent of ribosome"/>
    <property type="evidence" value="ECO:0007669"/>
    <property type="project" value="InterPro"/>
</dbReference>
<dbReference type="GO" id="GO:0006412">
    <property type="term" value="P:translation"/>
    <property type="evidence" value="ECO:0007669"/>
    <property type="project" value="UniProtKB-UniRule"/>
</dbReference>
<dbReference type="Gene3D" id="4.10.830.30">
    <property type="entry name" value="Ribosomal protein L31"/>
    <property type="match status" value="1"/>
</dbReference>
<dbReference type="HAMAP" id="MF_00501">
    <property type="entry name" value="Ribosomal_bL31_1"/>
    <property type="match status" value="1"/>
</dbReference>
<dbReference type="InterPro" id="IPR034704">
    <property type="entry name" value="Ribosomal_bL28/bL31-like_sf"/>
</dbReference>
<dbReference type="InterPro" id="IPR002150">
    <property type="entry name" value="Ribosomal_bL31"/>
</dbReference>
<dbReference type="InterPro" id="IPR027491">
    <property type="entry name" value="Ribosomal_bL31_A"/>
</dbReference>
<dbReference type="InterPro" id="IPR042105">
    <property type="entry name" value="Ribosomal_bL31_sf"/>
</dbReference>
<dbReference type="NCBIfam" id="TIGR00105">
    <property type="entry name" value="L31"/>
    <property type="match status" value="1"/>
</dbReference>
<dbReference type="NCBIfam" id="NF000612">
    <property type="entry name" value="PRK00019.1"/>
    <property type="match status" value="1"/>
</dbReference>
<dbReference type="NCBIfam" id="NF001809">
    <property type="entry name" value="PRK00528.1"/>
    <property type="match status" value="1"/>
</dbReference>
<dbReference type="PANTHER" id="PTHR33280">
    <property type="entry name" value="50S RIBOSOMAL PROTEIN L31, CHLOROPLASTIC"/>
    <property type="match status" value="1"/>
</dbReference>
<dbReference type="PANTHER" id="PTHR33280:SF6">
    <property type="entry name" value="LARGE RIBOSOMAL SUBUNIT PROTEIN BL31A"/>
    <property type="match status" value="1"/>
</dbReference>
<dbReference type="Pfam" id="PF01197">
    <property type="entry name" value="Ribosomal_L31"/>
    <property type="match status" value="1"/>
</dbReference>
<dbReference type="PRINTS" id="PR01249">
    <property type="entry name" value="RIBOSOMALL31"/>
</dbReference>
<dbReference type="SUPFAM" id="SSF143800">
    <property type="entry name" value="L28p-like"/>
    <property type="match status" value="1"/>
</dbReference>
<dbReference type="PROSITE" id="PS01143">
    <property type="entry name" value="RIBOSOMAL_L31"/>
    <property type="match status" value="1"/>
</dbReference>
<evidence type="ECO:0000255" key="1">
    <source>
        <dbReference type="HAMAP-Rule" id="MF_00501"/>
    </source>
</evidence>
<evidence type="ECO:0000305" key="2"/>